<keyword id="KW-0687">Ribonucleoprotein</keyword>
<keyword id="KW-0689">Ribosomal protein</keyword>
<keyword id="KW-0694">RNA-binding</keyword>
<keyword id="KW-0699">rRNA-binding</keyword>
<reference key="1">
    <citation type="journal article" date="2008" name="Antimicrob. Agents Chemother.">
        <title>Mutated response regulator graR is responsible for phenotypic conversion of Staphylococcus aureus from heterogeneous vancomycin-intermediate resistance to vancomycin-intermediate resistance.</title>
        <authorList>
            <person name="Neoh H.-M."/>
            <person name="Cui L."/>
            <person name="Yuzawa H."/>
            <person name="Takeuchi F."/>
            <person name="Matsuo M."/>
            <person name="Hiramatsu K."/>
        </authorList>
    </citation>
    <scope>NUCLEOTIDE SEQUENCE [LARGE SCALE GENOMIC DNA]</scope>
    <source>
        <strain>Mu3 / ATCC 700698</strain>
    </source>
</reference>
<proteinExistence type="inferred from homology"/>
<comment type="function">
    <text evidence="1">One of the primary rRNA binding proteins, it binds specifically to the 5'-end of 16S ribosomal RNA.</text>
</comment>
<comment type="subunit">
    <text evidence="1">Part of the 30S ribosomal subunit.</text>
</comment>
<comment type="similarity">
    <text evidence="1">Belongs to the universal ribosomal protein uS17 family.</text>
</comment>
<protein>
    <recommendedName>
        <fullName evidence="1">Small ribosomal subunit protein uS17</fullName>
    </recommendedName>
    <alternativeName>
        <fullName evidence="2">30S ribosomal protein S17</fullName>
    </alternativeName>
</protein>
<organism>
    <name type="scientific">Staphylococcus aureus (strain Mu3 / ATCC 700698)</name>
    <dbReference type="NCBI Taxonomy" id="418127"/>
    <lineage>
        <taxon>Bacteria</taxon>
        <taxon>Bacillati</taxon>
        <taxon>Bacillota</taxon>
        <taxon>Bacilli</taxon>
        <taxon>Bacillales</taxon>
        <taxon>Staphylococcaceae</taxon>
        <taxon>Staphylococcus</taxon>
    </lineage>
</organism>
<feature type="chain" id="PRO_1000055029" description="Small ribosomal subunit protein uS17">
    <location>
        <begin position="1"/>
        <end position="87"/>
    </location>
</feature>
<sequence>MSERNDRKVYVGKVVSDKMDKTITVLVETYKTHKLYGKRVKYSKKYKTHDENNSAKLGDIVKIQETRPLSATKRFRIVEIVEESVII</sequence>
<name>RS17_STAA1</name>
<evidence type="ECO:0000255" key="1">
    <source>
        <dbReference type="HAMAP-Rule" id="MF_01345"/>
    </source>
</evidence>
<evidence type="ECO:0000305" key="2"/>
<dbReference type="EMBL" id="AP009324">
    <property type="protein sequence ID" value="BAF79108.1"/>
    <property type="molecule type" value="Genomic_DNA"/>
</dbReference>
<dbReference type="RefSeq" id="WP_000004085.1">
    <property type="nucleotide sequence ID" value="NC_009782.1"/>
</dbReference>
<dbReference type="SMR" id="A7X5F0"/>
<dbReference type="KEGG" id="saw:SAHV_2225"/>
<dbReference type="HOGENOM" id="CLU_073626_1_0_9"/>
<dbReference type="GO" id="GO:0022627">
    <property type="term" value="C:cytosolic small ribosomal subunit"/>
    <property type="evidence" value="ECO:0007669"/>
    <property type="project" value="TreeGrafter"/>
</dbReference>
<dbReference type="GO" id="GO:0019843">
    <property type="term" value="F:rRNA binding"/>
    <property type="evidence" value="ECO:0007669"/>
    <property type="project" value="UniProtKB-UniRule"/>
</dbReference>
<dbReference type="GO" id="GO:0003735">
    <property type="term" value="F:structural constituent of ribosome"/>
    <property type="evidence" value="ECO:0007669"/>
    <property type="project" value="InterPro"/>
</dbReference>
<dbReference type="GO" id="GO:0006412">
    <property type="term" value="P:translation"/>
    <property type="evidence" value="ECO:0007669"/>
    <property type="project" value="UniProtKB-UniRule"/>
</dbReference>
<dbReference type="CDD" id="cd00364">
    <property type="entry name" value="Ribosomal_uS17"/>
    <property type="match status" value="1"/>
</dbReference>
<dbReference type="FunFam" id="2.40.50.140:FF:000026">
    <property type="entry name" value="30S ribosomal protein S17"/>
    <property type="match status" value="1"/>
</dbReference>
<dbReference type="Gene3D" id="2.40.50.140">
    <property type="entry name" value="Nucleic acid-binding proteins"/>
    <property type="match status" value="1"/>
</dbReference>
<dbReference type="HAMAP" id="MF_01345_B">
    <property type="entry name" value="Ribosomal_uS17_B"/>
    <property type="match status" value="1"/>
</dbReference>
<dbReference type="InterPro" id="IPR012340">
    <property type="entry name" value="NA-bd_OB-fold"/>
</dbReference>
<dbReference type="InterPro" id="IPR000266">
    <property type="entry name" value="Ribosomal_uS17"/>
</dbReference>
<dbReference type="InterPro" id="IPR019984">
    <property type="entry name" value="Ribosomal_uS17_bact/chlr"/>
</dbReference>
<dbReference type="InterPro" id="IPR019979">
    <property type="entry name" value="Ribosomal_uS17_CS"/>
</dbReference>
<dbReference type="NCBIfam" id="NF004123">
    <property type="entry name" value="PRK05610.1"/>
    <property type="match status" value="1"/>
</dbReference>
<dbReference type="NCBIfam" id="TIGR03635">
    <property type="entry name" value="uS17_bact"/>
    <property type="match status" value="1"/>
</dbReference>
<dbReference type="PANTHER" id="PTHR10744">
    <property type="entry name" value="40S RIBOSOMAL PROTEIN S11 FAMILY MEMBER"/>
    <property type="match status" value="1"/>
</dbReference>
<dbReference type="PANTHER" id="PTHR10744:SF1">
    <property type="entry name" value="SMALL RIBOSOMAL SUBUNIT PROTEIN US17M"/>
    <property type="match status" value="1"/>
</dbReference>
<dbReference type="Pfam" id="PF00366">
    <property type="entry name" value="Ribosomal_S17"/>
    <property type="match status" value="1"/>
</dbReference>
<dbReference type="PRINTS" id="PR00973">
    <property type="entry name" value="RIBOSOMALS17"/>
</dbReference>
<dbReference type="SUPFAM" id="SSF50249">
    <property type="entry name" value="Nucleic acid-binding proteins"/>
    <property type="match status" value="1"/>
</dbReference>
<dbReference type="PROSITE" id="PS00056">
    <property type="entry name" value="RIBOSOMAL_S17"/>
    <property type="match status" value="1"/>
</dbReference>
<gene>
    <name evidence="1" type="primary">rpsQ</name>
    <name type="ordered locus">SAHV_2225</name>
</gene>
<accession>A7X5F0</accession>